<organism>
    <name type="scientific">Nesocodon mauritianus</name>
    <name type="common">Blue Mauritius bellflower</name>
    <name type="synonym">Wahlenbergia mauritiana</name>
    <dbReference type="NCBI Taxonomy" id="519296"/>
    <lineage>
        <taxon>Eukaryota</taxon>
        <taxon>Viridiplantae</taxon>
        <taxon>Streptophyta</taxon>
        <taxon>Embryophyta</taxon>
        <taxon>Tracheophyta</taxon>
        <taxon>Spermatophyta</taxon>
        <taxon>Magnoliopsida</taxon>
        <taxon>eudicotyledons</taxon>
        <taxon>Gunneridae</taxon>
        <taxon>Pentapetalae</taxon>
        <taxon>asterids</taxon>
        <taxon>campanulids</taxon>
        <taxon>Asterales</taxon>
        <taxon>Campanulaceae</taxon>
        <taxon>Nesocodon</taxon>
    </lineage>
</organism>
<feature type="signal peptide" evidence="3">
    <location>
        <begin position="1"/>
        <end position="28"/>
    </location>
</feature>
<feature type="chain" id="PRO_0000456307" description="Sinalpyl alcohol oxidase Nec3">
    <location>
        <begin position="29"/>
        <end position="558"/>
    </location>
</feature>
<feature type="active site" description="Proton donor" evidence="2">
    <location>
        <position position="493"/>
    </location>
</feature>
<feature type="active site" description="Proton acceptor" evidence="2">
    <location>
        <position position="531"/>
    </location>
</feature>
<feature type="binding site" evidence="2">
    <location>
        <begin position="64"/>
        <end position="65"/>
    </location>
    <ligand>
        <name>FAD</name>
        <dbReference type="ChEBI" id="CHEBI:57692"/>
    </ligand>
</feature>
<feature type="binding site" evidence="2">
    <location>
        <begin position="83"/>
        <end position="84"/>
    </location>
    <ligand>
        <name>FAD</name>
        <dbReference type="ChEBI" id="CHEBI:57692"/>
    </ligand>
</feature>
<feature type="binding site" evidence="2">
    <location>
        <position position="131"/>
    </location>
    <ligand>
        <name>FAD</name>
        <dbReference type="ChEBI" id="CHEBI:57692"/>
    </ligand>
</feature>
<feature type="binding site" evidence="2">
    <location>
        <position position="135"/>
    </location>
    <ligand>
        <name>FAD</name>
        <dbReference type="ChEBI" id="CHEBI:57692"/>
    </ligand>
</feature>
<feature type="binding site" evidence="2">
    <location>
        <begin position="139"/>
        <end position="142"/>
    </location>
    <ligand>
        <name>FAD</name>
        <dbReference type="ChEBI" id="CHEBI:57692"/>
    </ligand>
</feature>
<feature type="binding site" evidence="2">
    <location>
        <position position="247"/>
    </location>
    <ligand>
        <name>FAD</name>
        <dbReference type="ChEBI" id="CHEBI:57692"/>
    </ligand>
</feature>
<feature type="binding site" evidence="2">
    <location>
        <begin position="492"/>
        <end position="493"/>
    </location>
    <ligand>
        <name>FAD</name>
        <dbReference type="ChEBI" id="CHEBI:57692"/>
    </ligand>
</feature>
<feature type="binding site" evidence="2">
    <location>
        <begin position="532"/>
        <end position="533"/>
    </location>
    <ligand>
        <name>FAD</name>
        <dbReference type="ChEBI" id="CHEBI:57692"/>
    </ligand>
</feature>
<feature type="glycosylation site" description="N-linked (GlcNAc...) asparagine" evidence="4">
    <location>
        <position position="76"/>
    </location>
</feature>
<feature type="glycosylation site" description="N-linked (GlcNAc...) asparagine" evidence="4">
    <location>
        <position position="180"/>
    </location>
</feature>
<feature type="glycosylation site" description="N-linked (GlcNAc...) asparagine" evidence="4">
    <location>
        <position position="308"/>
    </location>
</feature>
<feature type="glycosylation site" description="N-linked (GlcNAc...) asparagine" evidence="4">
    <location>
        <position position="386"/>
    </location>
</feature>
<feature type="glycosylation site" description="N-linked (GlcNAc...) asparagine" evidence="4">
    <location>
        <position position="473"/>
    </location>
</feature>
<feature type="disulfide bond" evidence="2">
    <location>
        <begin position="433"/>
        <end position="484"/>
    </location>
</feature>
<evidence type="ECO:0000250" key="1">
    <source>
        <dbReference type="UniProtKB" id="P52707"/>
    </source>
</evidence>
<evidence type="ECO:0000250" key="2">
    <source>
        <dbReference type="UniProtKB" id="Q945K2"/>
    </source>
</evidence>
<evidence type="ECO:0000255" key="3"/>
<evidence type="ECO:0000255" key="4">
    <source>
        <dbReference type="PROSITE-ProRule" id="PRU00498"/>
    </source>
</evidence>
<evidence type="ECO:0000269" key="5">
    <source>
    </source>
</evidence>
<evidence type="ECO:0000303" key="6">
    <source>
    </source>
</evidence>
<evidence type="ECO:0000305" key="7"/>
<dbReference type="EC" id="1.1.3.-" evidence="1"/>
<dbReference type="EMBL" id="OK664974">
    <property type="protein sequence ID" value="UIE54578.1"/>
    <property type="molecule type" value="mRNA"/>
</dbReference>
<dbReference type="SMR" id="P0DO52"/>
<dbReference type="GlyCosmos" id="P0DO52">
    <property type="glycosylation" value="5 sites, No reported glycans"/>
</dbReference>
<dbReference type="GO" id="GO:0050660">
    <property type="term" value="F:flavin adenine dinucleotide binding"/>
    <property type="evidence" value="ECO:0007669"/>
    <property type="project" value="InterPro"/>
</dbReference>
<dbReference type="GO" id="GO:0016614">
    <property type="term" value="F:oxidoreductase activity, acting on CH-OH group of donors"/>
    <property type="evidence" value="ECO:0007669"/>
    <property type="project" value="InterPro"/>
</dbReference>
<dbReference type="Gene3D" id="3.30.410.40">
    <property type="match status" value="1"/>
</dbReference>
<dbReference type="Gene3D" id="3.50.50.60">
    <property type="entry name" value="FAD/NAD(P)-binding domain"/>
    <property type="match status" value="1"/>
</dbReference>
<dbReference type="InterPro" id="IPR036188">
    <property type="entry name" value="FAD/NAD-bd_sf"/>
</dbReference>
<dbReference type="InterPro" id="IPR051871">
    <property type="entry name" value="GMC_Oxidoreductase-Related"/>
</dbReference>
<dbReference type="InterPro" id="IPR012132">
    <property type="entry name" value="GMC_OxRdtase"/>
</dbReference>
<dbReference type="InterPro" id="IPR000172">
    <property type="entry name" value="GMC_OxRdtase_N"/>
</dbReference>
<dbReference type="InterPro" id="IPR007867">
    <property type="entry name" value="GMC_OxRtase_C"/>
</dbReference>
<dbReference type="PANTHER" id="PTHR45968:SF36">
    <property type="entry name" value="(R)-MANDELONITRILE LYASE 4-RELATED"/>
    <property type="match status" value="1"/>
</dbReference>
<dbReference type="PANTHER" id="PTHR45968">
    <property type="entry name" value="OSJNBA0019K04.7 PROTEIN"/>
    <property type="match status" value="1"/>
</dbReference>
<dbReference type="Pfam" id="PF05199">
    <property type="entry name" value="GMC_oxred_C"/>
    <property type="match status" value="1"/>
</dbReference>
<dbReference type="Pfam" id="PF00732">
    <property type="entry name" value="GMC_oxred_N"/>
    <property type="match status" value="1"/>
</dbReference>
<dbReference type="PIRSF" id="PIRSF000137">
    <property type="entry name" value="Alcohol_oxidase"/>
    <property type="match status" value="1"/>
</dbReference>
<dbReference type="SUPFAM" id="SSF54373">
    <property type="entry name" value="FAD-linked reductases, C-terminal domain"/>
    <property type="match status" value="1"/>
</dbReference>
<dbReference type="SUPFAM" id="SSF51905">
    <property type="entry name" value="FAD/NAD(P)-binding domain"/>
    <property type="match status" value="1"/>
</dbReference>
<dbReference type="PROSITE" id="PS00624">
    <property type="entry name" value="GMC_OXRED_2"/>
    <property type="match status" value="1"/>
</dbReference>
<accession>P0DO52</accession>
<name>NEC3_NESMA</name>
<protein>
    <recommendedName>
        <fullName evidence="6">Sinalpyl alcohol oxidase Nec3</fullName>
        <ecNumber evidence="1">1.1.3.-</ecNumber>
    </recommendedName>
    <alternativeName>
        <fullName evidence="6">Nectar protein 3</fullName>
        <shortName evidence="6">NmNec3</shortName>
    </alternativeName>
</protein>
<comment type="function">
    <text evidence="5">Involved in the production of blood-red nectar containing the alkaloid nesocodin and that serves as a visual attractant for pollinator visitation, including vertebrates such as Phelsuma geckos (PubMed:35074876). The nectar is initially acidic and pale yellow, but slowly becomes alkaline before turning into red within 24 hours (PubMed:35074876). Together with NEC1 and NEC2, facilitates the condensation of sinapaldehyde ((E)-3,5-dimethoxy-4-hydroxycinnamaldehyde) and proline to form nesocodin, a pigment with a stable imine bond (PubMed:35074876). Catalyzes the conversion of sinapyl alcohol to sinapaldehyde (PubMed:35074876).</text>
</comment>
<comment type="catalytic activity">
    <reaction evidence="5">
        <text>(E)-sinapyl alcohol + O2 = (E)-sinapaldehyde + H2O2</text>
        <dbReference type="Rhea" id="RHEA:72031"/>
        <dbReference type="ChEBI" id="CHEBI:15379"/>
        <dbReference type="ChEBI" id="CHEBI:16240"/>
        <dbReference type="ChEBI" id="CHEBI:27949"/>
        <dbReference type="ChEBI" id="CHEBI:64557"/>
    </reaction>
    <physiologicalReaction direction="left-to-right" evidence="5">
        <dbReference type="Rhea" id="RHEA:72032"/>
    </physiologicalReaction>
</comment>
<comment type="cofactor">
    <cofactor evidence="2">
        <name>FAD</name>
        <dbReference type="ChEBI" id="CHEBI:57692"/>
    </cofactor>
</comment>
<comment type="pathway">
    <text evidence="5">Alkaloid biosynthesis.</text>
</comment>
<comment type="subunit">
    <text evidence="2">Monomer.</text>
</comment>
<comment type="tissue specificity">
    <text evidence="5">Confined to nectaries.</text>
</comment>
<comment type="similarity">
    <text evidence="7">Belongs to the GMC oxidoreductase family.</text>
</comment>
<comment type="online information" name="Protein Spotlight">
    <link uri="https://www.proteinspotlight.org/back_issues/250/"/>
    <text>The colour red - Issue 250 of August 2022</text>
</comment>
<sequence length="558" mass="60778">MATMAILQRTFSFILIFSIALHLKSLFAMETDSGAELKYLELIHEANEFTPDEEYDYIVVGGGTAGCPLAATLSENYSVLVLERGGDQHSHPNIIRQENVANNALPADDENSPSQAFTSEDGVPGLVRGRVLGGSSMINFGFYSRGDDYFFKNTGIEWDMDSVKTAYEWVEETLVHRPDNVSTWESSVRDALLEVGVLPDNGNTLDHLVGTKVSGSTFDSTGNRHGAVELLNKANPNNLRVIVHATVDRIIFSSSESSGPSVVRVVYHDSHGKSYQVGIRENGEVILSAGAFGSPQLLLVSGVGPSQNLTSLEIPVVHDQPFVGQYMIDNPRINLALMLPFSVVDSGTPVVGITGKGSYIETTSSSTPFTSPVSPLYFPYPYPPVNISMGYFFGKVSNPTSAGSLWLKSPSDVAITPSVRFNYFSKPEDVHQCADAVATYEKILKTKAMEMYKFKDHGGEKYFQIVGRQIPENTSDFESMATYCRKTVTTFYHYCGGCTVNKVVDSNLKVVGIGGLRVVDNSVFTSSPGTNPQATTMMLGRYMGVKIQQERAGSDGDN</sequence>
<proteinExistence type="evidence at protein level"/>
<gene>
    <name evidence="6" type="primary">NEC3</name>
</gene>
<keyword id="KW-1015">Disulfide bond</keyword>
<keyword id="KW-0274">FAD</keyword>
<keyword id="KW-0285">Flavoprotein</keyword>
<keyword id="KW-0325">Glycoprotein</keyword>
<keyword id="KW-0560">Oxidoreductase</keyword>
<keyword id="KW-0732">Signal</keyword>
<reference key="1">
    <citation type="journal article" date="2022" name="Proc. Natl. Acad. Sci. U.S.A.">
        <title>Convergent evolution of a blood-red nectar pigment in vertebrate-pollinated flowers.</title>
        <authorList>
            <person name="Roy R."/>
            <person name="Moreno N."/>
            <person name="Brockman S.A."/>
            <person name="Kostanecki A."/>
            <person name="Zambre A."/>
            <person name="Holl C."/>
            <person name="Solhaug E.M."/>
            <person name="Minami A."/>
            <person name="Snell-Rood E.C."/>
            <person name="Hampton M."/>
            <person name="Bee M.A."/>
            <person name="Chiari Y."/>
            <person name="Hegeman A.D."/>
            <person name="Carter C.J."/>
        </authorList>
    </citation>
    <scope>NUCLEOTIDE SEQUENCE [MRNA]</scope>
    <scope>FUNCTION</scope>
    <scope>CATALYTIC ACTIVITY</scope>
    <scope>PATHWAY</scope>
    <scope>TISSUE SPECIFICITY</scope>
</reference>